<dbReference type="EMBL" id="AL009126">
    <property type="protein sequence ID" value="CAX52626.1"/>
    <property type="molecule type" value="Genomic_DNA"/>
</dbReference>
<dbReference type="RefSeq" id="WP_003244964.1">
    <property type="nucleotide sequence ID" value="NZ_OZ025638.1"/>
</dbReference>
<dbReference type="RefSeq" id="YP_003097732.1">
    <property type="nucleotide sequence ID" value="NC_000964.3"/>
</dbReference>
<dbReference type="SMR" id="C0H418"/>
<dbReference type="FunCoup" id="C0H418">
    <property type="interactions" value="8"/>
</dbReference>
<dbReference type="STRING" id="224308.BSU18019"/>
<dbReference type="PaxDb" id="224308-BSU18019"/>
<dbReference type="EnsemblBacteria" id="CAX52626">
    <property type="protein sequence ID" value="CAX52626"/>
    <property type="gene ID" value="BSU_18019"/>
</dbReference>
<dbReference type="GeneID" id="8302958"/>
<dbReference type="KEGG" id="bsu:BSU18019"/>
<dbReference type="PATRIC" id="fig|224308.179.peg.1963"/>
<dbReference type="InParanoid" id="C0H418"/>
<dbReference type="OrthoDB" id="2991278at2"/>
<dbReference type="BioCyc" id="BSUB:BSU18019-MONOMER"/>
<dbReference type="PRO" id="PR:C0H418"/>
<dbReference type="Proteomes" id="UP000001570">
    <property type="component" value="Chromosome"/>
</dbReference>
<dbReference type="InterPro" id="IPR025004">
    <property type="entry name" value="SenN/SenS"/>
</dbReference>
<dbReference type="Pfam" id="PF13040">
    <property type="entry name" value="Fur_reg_FbpB"/>
    <property type="match status" value="1"/>
</dbReference>
<proteinExistence type="predicted"/>
<name>YNZL_BACSU</name>
<organism>
    <name type="scientific">Bacillus subtilis (strain 168)</name>
    <dbReference type="NCBI Taxonomy" id="224308"/>
    <lineage>
        <taxon>Bacteria</taxon>
        <taxon>Bacillati</taxon>
        <taxon>Bacillota</taxon>
        <taxon>Bacilli</taxon>
        <taxon>Bacillales</taxon>
        <taxon>Bacillaceae</taxon>
        <taxon>Bacillus</taxon>
    </lineage>
</organism>
<keyword id="KW-1185">Reference proteome</keyword>
<reference key="1">
    <citation type="journal article" date="1997" name="Nature">
        <title>The complete genome sequence of the Gram-positive bacterium Bacillus subtilis.</title>
        <authorList>
            <person name="Kunst F."/>
            <person name="Ogasawara N."/>
            <person name="Moszer I."/>
            <person name="Albertini A.M."/>
            <person name="Alloni G."/>
            <person name="Azevedo V."/>
            <person name="Bertero M.G."/>
            <person name="Bessieres P."/>
            <person name="Bolotin A."/>
            <person name="Borchert S."/>
            <person name="Borriss R."/>
            <person name="Boursier L."/>
            <person name="Brans A."/>
            <person name="Braun M."/>
            <person name="Brignell S.C."/>
            <person name="Bron S."/>
            <person name="Brouillet S."/>
            <person name="Bruschi C.V."/>
            <person name="Caldwell B."/>
            <person name="Capuano V."/>
            <person name="Carter N.M."/>
            <person name="Choi S.-K."/>
            <person name="Codani J.-J."/>
            <person name="Connerton I.F."/>
            <person name="Cummings N.J."/>
            <person name="Daniel R.A."/>
            <person name="Denizot F."/>
            <person name="Devine K.M."/>
            <person name="Duesterhoeft A."/>
            <person name="Ehrlich S.D."/>
            <person name="Emmerson P.T."/>
            <person name="Entian K.-D."/>
            <person name="Errington J."/>
            <person name="Fabret C."/>
            <person name="Ferrari E."/>
            <person name="Foulger D."/>
            <person name="Fritz C."/>
            <person name="Fujita M."/>
            <person name="Fujita Y."/>
            <person name="Fuma S."/>
            <person name="Galizzi A."/>
            <person name="Galleron N."/>
            <person name="Ghim S.-Y."/>
            <person name="Glaser P."/>
            <person name="Goffeau A."/>
            <person name="Golightly E.J."/>
            <person name="Grandi G."/>
            <person name="Guiseppi G."/>
            <person name="Guy B.J."/>
            <person name="Haga K."/>
            <person name="Haiech J."/>
            <person name="Harwood C.R."/>
            <person name="Henaut A."/>
            <person name="Hilbert H."/>
            <person name="Holsappel S."/>
            <person name="Hosono S."/>
            <person name="Hullo M.-F."/>
            <person name="Itaya M."/>
            <person name="Jones L.-M."/>
            <person name="Joris B."/>
            <person name="Karamata D."/>
            <person name="Kasahara Y."/>
            <person name="Klaerr-Blanchard M."/>
            <person name="Klein C."/>
            <person name="Kobayashi Y."/>
            <person name="Koetter P."/>
            <person name="Koningstein G."/>
            <person name="Krogh S."/>
            <person name="Kumano M."/>
            <person name="Kurita K."/>
            <person name="Lapidus A."/>
            <person name="Lardinois S."/>
            <person name="Lauber J."/>
            <person name="Lazarevic V."/>
            <person name="Lee S.-M."/>
            <person name="Levine A."/>
            <person name="Liu H."/>
            <person name="Masuda S."/>
            <person name="Mauel C."/>
            <person name="Medigue C."/>
            <person name="Medina N."/>
            <person name="Mellado R.P."/>
            <person name="Mizuno M."/>
            <person name="Moestl D."/>
            <person name="Nakai S."/>
            <person name="Noback M."/>
            <person name="Noone D."/>
            <person name="O'Reilly M."/>
            <person name="Ogawa K."/>
            <person name="Ogiwara A."/>
            <person name="Oudega B."/>
            <person name="Park S.-H."/>
            <person name="Parro V."/>
            <person name="Pohl T.M."/>
            <person name="Portetelle D."/>
            <person name="Porwollik S."/>
            <person name="Prescott A.M."/>
            <person name="Presecan E."/>
            <person name="Pujic P."/>
            <person name="Purnelle B."/>
            <person name="Rapoport G."/>
            <person name="Rey M."/>
            <person name="Reynolds S."/>
            <person name="Rieger M."/>
            <person name="Rivolta C."/>
            <person name="Rocha E."/>
            <person name="Roche B."/>
            <person name="Rose M."/>
            <person name="Sadaie Y."/>
            <person name="Sato T."/>
            <person name="Scanlan E."/>
            <person name="Schleich S."/>
            <person name="Schroeter R."/>
            <person name="Scoffone F."/>
            <person name="Sekiguchi J."/>
            <person name="Sekowska A."/>
            <person name="Seror S.J."/>
            <person name="Serror P."/>
            <person name="Shin B.-S."/>
            <person name="Soldo B."/>
            <person name="Sorokin A."/>
            <person name="Tacconi E."/>
            <person name="Takagi T."/>
            <person name="Takahashi H."/>
            <person name="Takemaru K."/>
            <person name="Takeuchi M."/>
            <person name="Tamakoshi A."/>
            <person name="Tanaka T."/>
            <person name="Terpstra P."/>
            <person name="Tognoni A."/>
            <person name="Tosato V."/>
            <person name="Uchiyama S."/>
            <person name="Vandenbol M."/>
            <person name="Vannier F."/>
            <person name="Vassarotti A."/>
            <person name="Viari A."/>
            <person name="Wambutt R."/>
            <person name="Wedler E."/>
            <person name="Wedler H."/>
            <person name="Weitzenegger T."/>
            <person name="Winters P."/>
            <person name="Wipat A."/>
            <person name="Yamamoto H."/>
            <person name="Yamane K."/>
            <person name="Yasumoto K."/>
            <person name="Yata K."/>
            <person name="Yoshida K."/>
            <person name="Yoshikawa H.-F."/>
            <person name="Zumstein E."/>
            <person name="Yoshikawa H."/>
            <person name="Danchin A."/>
        </authorList>
    </citation>
    <scope>NUCLEOTIDE SEQUENCE [LARGE SCALE GENOMIC DNA]</scope>
    <source>
        <strain>168</strain>
    </source>
</reference>
<accession>C0H418</accession>
<feature type="chain" id="PRO_0000386664" description="Uncharacterized protein YnzL">
    <location>
        <begin position="1"/>
        <end position="41"/>
    </location>
</feature>
<sequence length="41" mass="5216">MKKMRKRSFHELVMENKKELMTNTEYLNQLEEKLEQRFKQK</sequence>
<gene>
    <name type="primary">ynzL</name>
    <name type="ordered locus">BSU18019</name>
</gene>
<protein>
    <recommendedName>
        <fullName>Uncharacterized protein YnzL</fullName>
    </recommendedName>
</protein>